<gene>
    <name type="primary">bolA</name>
    <name type="ordered locus">HI_0163</name>
</gene>
<feature type="chain" id="PRO_0000201215" description="DNA-binding transcriptional regulator BolA">
    <location>
        <begin position="1"/>
        <end position="103"/>
    </location>
</feature>
<name>BOLA_HAEIN</name>
<reference key="1">
    <citation type="submission" date="1995-01" db="EMBL/GenBank/DDBJ databases">
        <authorList>
            <person name="Barcak G.J."/>
            <person name="Heimer S.R."/>
        </authorList>
    </citation>
    <scope>NUCLEOTIDE SEQUENCE [GENOMIC DNA]</scope>
    <source>
        <strain>ATCC 51907 / DSM 11121 / KW20 / Rd</strain>
    </source>
</reference>
<reference key="2">
    <citation type="journal article" date="1995" name="Science">
        <title>Whole-genome random sequencing and assembly of Haemophilus influenzae Rd.</title>
        <authorList>
            <person name="Fleischmann R.D."/>
            <person name="Adams M.D."/>
            <person name="White O."/>
            <person name="Clayton R.A."/>
            <person name="Kirkness E.F."/>
            <person name="Kerlavage A.R."/>
            <person name="Bult C.J."/>
            <person name="Tomb J.-F."/>
            <person name="Dougherty B.A."/>
            <person name="Merrick J.M."/>
            <person name="McKenney K."/>
            <person name="Sutton G.G."/>
            <person name="FitzHugh W."/>
            <person name="Fields C.A."/>
            <person name="Gocayne J.D."/>
            <person name="Scott J.D."/>
            <person name="Shirley R."/>
            <person name="Liu L.-I."/>
            <person name="Glodek A."/>
            <person name="Kelley J.M."/>
            <person name="Weidman J.F."/>
            <person name="Phillips C.A."/>
            <person name="Spriggs T."/>
            <person name="Hedblom E."/>
            <person name="Cotton M.D."/>
            <person name="Utterback T.R."/>
            <person name="Hanna M.C."/>
            <person name="Nguyen D.T."/>
            <person name="Saudek D.M."/>
            <person name="Brandon R.C."/>
            <person name="Fine L.D."/>
            <person name="Fritchman J.L."/>
            <person name="Fuhrmann J.L."/>
            <person name="Geoghagen N.S.M."/>
            <person name="Gnehm C.L."/>
            <person name="McDonald L.A."/>
            <person name="Small K.V."/>
            <person name="Fraser C.M."/>
            <person name="Smith H.O."/>
            <person name="Venter J.C."/>
        </authorList>
    </citation>
    <scope>NUCLEOTIDE SEQUENCE [LARGE SCALE GENOMIC DNA]</scope>
    <source>
        <strain>ATCC 51907 / DSM 11121 / KW20 / Rd</strain>
    </source>
</reference>
<evidence type="ECO:0000250" key="1">
    <source>
        <dbReference type="UniProtKB" id="P0ABE2"/>
    </source>
</evidence>
<evidence type="ECO:0000305" key="2"/>
<sequence length="103" mass="12057">MSIQQIIEQKIQKEFQPHFLAIENESHLHHSNRGSESHFKCVIVSADFKNIRKVQRHQRIYQLLNEELNHSIHALALHLFTPEEWKAQNETVPHSTKCAGIGR</sequence>
<organism>
    <name type="scientific">Haemophilus influenzae (strain ATCC 51907 / DSM 11121 / KW20 / Rd)</name>
    <dbReference type="NCBI Taxonomy" id="71421"/>
    <lineage>
        <taxon>Bacteria</taxon>
        <taxon>Pseudomonadati</taxon>
        <taxon>Pseudomonadota</taxon>
        <taxon>Gammaproteobacteria</taxon>
        <taxon>Pasteurellales</taxon>
        <taxon>Pasteurellaceae</taxon>
        <taxon>Haemophilus</taxon>
    </lineage>
</organism>
<proteinExistence type="inferred from homology"/>
<dbReference type="EMBL" id="U20229">
    <property type="protein sequence ID" value="AAA62135.1"/>
    <property type="molecule type" value="Genomic_DNA"/>
</dbReference>
<dbReference type="EMBL" id="L42023">
    <property type="protein sequence ID" value="AAC21835.1"/>
    <property type="molecule type" value="Genomic_DNA"/>
</dbReference>
<dbReference type="PIR" id="B64052">
    <property type="entry name" value="B64052"/>
</dbReference>
<dbReference type="RefSeq" id="NP_438333.1">
    <property type="nucleotide sequence ID" value="NC_000907.1"/>
</dbReference>
<dbReference type="SMR" id="P43780"/>
<dbReference type="STRING" id="71421.HI_0163"/>
<dbReference type="EnsemblBacteria" id="AAC21835">
    <property type="protein sequence ID" value="AAC21835"/>
    <property type="gene ID" value="HI_0163"/>
</dbReference>
<dbReference type="KEGG" id="hin:HI_0163"/>
<dbReference type="PATRIC" id="fig|71421.8.peg.169"/>
<dbReference type="eggNOG" id="COG0271">
    <property type="taxonomic scope" value="Bacteria"/>
</dbReference>
<dbReference type="HOGENOM" id="CLU_109462_3_1_6"/>
<dbReference type="OrthoDB" id="9801469at2"/>
<dbReference type="PhylomeDB" id="P43780"/>
<dbReference type="BioCyc" id="HINF71421:G1GJ1-175-MONOMER"/>
<dbReference type="Proteomes" id="UP000000579">
    <property type="component" value="Chromosome"/>
</dbReference>
<dbReference type="GO" id="GO:0005829">
    <property type="term" value="C:cytosol"/>
    <property type="evidence" value="ECO:0000318"/>
    <property type="project" value="GO_Central"/>
</dbReference>
<dbReference type="GO" id="GO:0003677">
    <property type="term" value="F:DNA binding"/>
    <property type="evidence" value="ECO:0007669"/>
    <property type="project" value="UniProtKB-KW"/>
</dbReference>
<dbReference type="GO" id="GO:0006351">
    <property type="term" value="P:DNA-templated transcription"/>
    <property type="evidence" value="ECO:0000318"/>
    <property type="project" value="GO_Central"/>
</dbReference>
<dbReference type="Gene3D" id="3.30.300.90">
    <property type="entry name" value="BolA-like"/>
    <property type="match status" value="1"/>
</dbReference>
<dbReference type="InterPro" id="IPR002634">
    <property type="entry name" value="BolA"/>
</dbReference>
<dbReference type="InterPro" id="IPR036065">
    <property type="entry name" value="BolA-like_sf"/>
</dbReference>
<dbReference type="InterPro" id="IPR050961">
    <property type="entry name" value="BolA/IbaG_stress_morph_reg"/>
</dbReference>
<dbReference type="PANTHER" id="PTHR46229">
    <property type="entry name" value="BOLA TRANSCRIPTION REGULATOR"/>
    <property type="match status" value="1"/>
</dbReference>
<dbReference type="PANTHER" id="PTHR46229:SF2">
    <property type="entry name" value="BOLA-LIKE PROTEIN 1"/>
    <property type="match status" value="1"/>
</dbReference>
<dbReference type="Pfam" id="PF01722">
    <property type="entry name" value="BolA"/>
    <property type="match status" value="1"/>
</dbReference>
<dbReference type="PIRSF" id="PIRSF003113">
    <property type="entry name" value="BolA"/>
    <property type="match status" value="1"/>
</dbReference>
<dbReference type="SUPFAM" id="SSF82657">
    <property type="entry name" value="BolA-like"/>
    <property type="match status" value="1"/>
</dbReference>
<comment type="function">
    <text evidence="1">Transcriptional regulator that plays an important role in general stress response.</text>
</comment>
<comment type="similarity">
    <text evidence="2">Belongs to the BolA/IbaG family.</text>
</comment>
<keyword id="KW-0238">DNA-binding</keyword>
<keyword id="KW-1185">Reference proteome</keyword>
<keyword id="KW-0346">Stress response</keyword>
<keyword id="KW-0804">Transcription</keyword>
<keyword id="KW-0805">Transcription regulation</keyword>
<protein>
    <recommendedName>
        <fullName evidence="1">DNA-binding transcriptional regulator BolA</fullName>
    </recommendedName>
</protein>
<accession>P43780</accession>